<name>IOLA1_GEOKA</name>
<evidence type="ECO:0000255" key="1">
    <source>
        <dbReference type="HAMAP-Rule" id="MF_01670"/>
    </source>
</evidence>
<proteinExistence type="inferred from homology"/>
<accession>Q5L025</accession>
<reference key="1">
    <citation type="journal article" date="2004" name="Nucleic Acids Res.">
        <title>Thermoadaptation trait revealed by the genome sequence of thermophilic Geobacillus kaustophilus.</title>
        <authorList>
            <person name="Takami H."/>
            <person name="Takaki Y."/>
            <person name="Chee G.-J."/>
            <person name="Nishi S."/>
            <person name="Shimamura S."/>
            <person name="Suzuki H."/>
            <person name="Matsui S."/>
            <person name="Uchiyama I."/>
        </authorList>
    </citation>
    <scope>NUCLEOTIDE SEQUENCE [LARGE SCALE GENOMIC DNA]</scope>
    <source>
        <strain>HTA426</strain>
    </source>
</reference>
<gene>
    <name evidence="1" type="primary">iolA1</name>
    <name type="ordered locus">GK1426</name>
</gene>
<dbReference type="EC" id="1.2.1.27" evidence="1"/>
<dbReference type="EMBL" id="BA000043">
    <property type="protein sequence ID" value="BAD75711.1"/>
    <property type="molecule type" value="Genomic_DNA"/>
</dbReference>
<dbReference type="RefSeq" id="WP_011230922.1">
    <property type="nucleotide sequence ID" value="NC_006510.1"/>
</dbReference>
<dbReference type="SMR" id="Q5L025"/>
<dbReference type="STRING" id="235909.GK1426"/>
<dbReference type="KEGG" id="gka:GK1426"/>
<dbReference type="eggNOG" id="COG1012">
    <property type="taxonomic scope" value="Bacteria"/>
</dbReference>
<dbReference type="HOGENOM" id="CLU_005391_1_10_9"/>
<dbReference type="UniPathway" id="UPA00076">
    <property type="reaction ID" value="UER00148"/>
</dbReference>
<dbReference type="Proteomes" id="UP000001172">
    <property type="component" value="Chromosome"/>
</dbReference>
<dbReference type="GO" id="GO:0018478">
    <property type="term" value="F:malonate-semialdehyde dehydrogenase (acetylating) activity"/>
    <property type="evidence" value="ECO:0007669"/>
    <property type="project" value="UniProtKB-UniRule"/>
</dbReference>
<dbReference type="GO" id="GO:0004491">
    <property type="term" value="F:methylmalonate-semialdehyde dehydrogenase (acylating, NAD) activity"/>
    <property type="evidence" value="ECO:0007669"/>
    <property type="project" value="UniProtKB-UniRule"/>
</dbReference>
<dbReference type="GO" id="GO:0019310">
    <property type="term" value="P:inositol catabolic process"/>
    <property type="evidence" value="ECO:0007669"/>
    <property type="project" value="UniProtKB-UniRule"/>
</dbReference>
<dbReference type="GO" id="GO:0006210">
    <property type="term" value="P:thymine catabolic process"/>
    <property type="evidence" value="ECO:0007669"/>
    <property type="project" value="TreeGrafter"/>
</dbReference>
<dbReference type="GO" id="GO:0006574">
    <property type="term" value="P:valine catabolic process"/>
    <property type="evidence" value="ECO:0007669"/>
    <property type="project" value="TreeGrafter"/>
</dbReference>
<dbReference type="CDD" id="cd07085">
    <property type="entry name" value="ALDH_F6_MMSDH"/>
    <property type="match status" value="1"/>
</dbReference>
<dbReference type="FunFam" id="3.40.309.10:FF:000002">
    <property type="entry name" value="Methylmalonate-semialdehyde dehydrogenase (Acylating)"/>
    <property type="match status" value="1"/>
</dbReference>
<dbReference type="FunFam" id="3.40.605.10:FF:000003">
    <property type="entry name" value="Methylmalonate-semialdehyde dehydrogenase [acylating]"/>
    <property type="match status" value="1"/>
</dbReference>
<dbReference type="Gene3D" id="3.40.605.10">
    <property type="entry name" value="Aldehyde Dehydrogenase, Chain A, domain 1"/>
    <property type="match status" value="1"/>
</dbReference>
<dbReference type="Gene3D" id="3.40.309.10">
    <property type="entry name" value="Aldehyde Dehydrogenase, Chain A, domain 2"/>
    <property type="match status" value="1"/>
</dbReference>
<dbReference type="HAMAP" id="MF_01670">
    <property type="entry name" value="IolA"/>
    <property type="match status" value="1"/>
</dbReference>
<dbReference type="InterPro" id="IPR016161">
    <property type="entry name" value="Ald_DH/histidinol_DH"/>
</dbReference>
<dbReference type="InterPro" id="IPR016163">
    <property type="entry name" value="Ald_DH_C"/>
</dbReference>
<dbReference type="InterPro" id="IPR016160">
    <property type="entry name" value="Ald_DH_CS_CYS"/>
</dbReference>
<dbReference type="InterPro" id="IPR016162">
    <property type="entry name" value="Ald_DH_N"/>
</dbReference>
<dbReference type="InterPro" id="IPR015590">
    <property type="entry name" value="Aldehyde_DH_dom"/>
</dbReference>
<dbReference type="InterPro" id="IPR010061">
    <property type="entry name" value="MeMal-semiAld_DH"/>
</dbReference>
<dbReference type="InterPro" id="IPR023510">
    <property type="entry name" value="MSDH_GmP_bac"/>
</dbReference>
<dbReference type="NCBIfam" id="TIGR01722">
    <property type="entry name" value="MMSDH"/>
    <property type="match status" value="1"/>
</dbReference>
<dbReference type="PANTHER" id="PTHR43866">
    <property type="entry name" value="MALONATE-SEMIALDEHYDE DEHYDROGENASE"/>
    <property type="match status" value="1"/>
</dbReference>
<dbReference type="PANTHER" id="PTHR43866:SF4">
    <property type="entry name" value="MALONATE-SEMIALDEHYDE DEHYDROGENASE"/>
    <property type="match status" value="1"/>
</dbReference>
<dbReference type="Pfam" id="PF00171">
    <property type="entry name" value="Aldedh"/>
    <property type="match status" value="1"/>
</dbReference>
<dbReference type="SUPFAM" id="SSF53720">
    <property type="entry name" value="ALDH-like"/>
    <property type="match status" value="1"/>
</dbReference>
<dbReference type="PROSITE" id="PS00070">
    <property type="entry name" value="ALDEHYDE_DEHYDR_CYS"/>
    <property type="match status" value="1"/>
</dbReference>
<organism>
    <name type="scientific">Geobacillus kaustophilus (strain HTA426)</name>
    <dbReference type="NCBI Taxonomy" id="235909"/>
    <lineage>
        <taxon>Bacteria</taxon>
        <taxon>Bacillati</taxon>
        <taxon>Bacillota</taxon>
        <taxon>Bacilli</taxon>
        <taxon>Bacillales</taxon>
        <taxon>Anoxybacillaceae</taxon>
        <taxon>Geobacillus</taxon>
        <taxon>Geobacillus thermoleovorans group</taxon>
    </lineage>
</organism>
<sequence>MSITKPETTVLKNYIGGQWVASSGTETLEVPNPATGEVLARVPISTKEDVDQAVQAAKKAFATWKDVPVPKRARIMFSFHHLLNQHHEELAELVVQENGKAYKEAYGEIQRGIECVEFAAGAPTLLMGESLSNIAEEIDSEMFRYPLGVVAGITPFNFPMMVPLWMFPLAIVCGNTFVLKPSERTPILANKLAELFTEAGAPPGVLNVVHGAHEVVNALIDHEDIRAISFVGSQPVAKYVYERTAAQGKRVQALSGAKNHHIVMPDADVETAVQHVISSAFGSAGQRCMACSAVVIVGENETFVRRLKQKADELIIGNGMDPEVLLTPVIRQSHREKVLGYIQKGIEEGAVLLRDGRKEMDDRPEGNFLGPTIFDYVTPDMTIAKEEIFAPVLSLLRANDLDEALSYIRKSRYGNGATIYTKDAKAVRKFREEADAGMLGINVGVPATMAFFPFSGWKDSFYGDLHVNGKDGVNFYTRKKMITSRFDF</sequence>
<feature type="chain" id="PRO_0000352339" description="Malonate-semialdehyde dehydrogenase 1">
    <location>
        <begin position="1"/>
        <end position="488"/>
    </location>
</feature>
<feature type="active site" description="Nucleophile" evidence="1">
    <location>
        <position position="288"/>
    </location>
</feature>
<feature type="binding site" evidence="1">
    <location>
        <position position="156"/>
    </location>
    <ligand>
        <name>NAD(+)</name>
        <dbReference type="ChEBI" id="CHEBI:57540"/>
    </ligand>
</feature>
<feature type="binding site" evidence="1">
    <location>
        <position position="180"/>
    </location>
    <ligand>
        <name>NAD(+)</name>
        <dbReference type="ChEBI" id="CHEBI:57540"/>
    </ligand>
</feature>
<feature type="binding site" evidence="1">
    <location>
        <position position="183"/>
    </location>
    <ligand>
        <name>NAD(+)</name>
        <dbReference type="ChEBI" id="CHEBI:57540"/>
    </ligand>
</feature>
<feature type="binding site" evidence="1">
    <location>
        <position position="184"/>
    </location>
    <ligand>
        <name>NAD(+)</name>
        <dbReference type="ChEBI" id="CHEBI:57540"/>
    </ligand>
</feature>
<feature type="binding site" evidence="1">
    <location>
        <position position="233"/>
    </location>
    <ligand>
        <name>NAD(+)</name>
        <dbReference type="ChEBI" id="CHEBI:57540"/>
    </ligand>
</feature>
<feature type="binding site" evidence="1">
    <location>
        <position position="255"/>
    </location>
    <ligand>
        <name>NAD(+)</name>
        <dbReference type="ChEBI" id="CHEBI:57540"/>
    </ligand>
</feature>
<feature type="binding site" evidence="1">
    <location>
        <position position="387"/>
    </location>
    <ligand>
        <name>NAD(+)</name>
        <dbReference type="ChEBI" id="CHEBI:57540"/>
    </ligand>
</feature>
<keyword id="KW-0520">NAD</keyword>
<keyword id="KW-0560">Oxidoreductase</keyword>
<keyword id="KW-1185">Reference proteome</keyword>
<comment type="function">
    <text evidence="1">Catalyzes the oxidation of malonate semialdehyde (MSA) and methylmalonate semialdehyde (MMSA) into acetyl-CoA and propanoyl-CoA, respectively. Is involved in a myo-inositol catabolic pathway. Bicarbonate, and not CO2, is the end-product of the enzymatic reaction.</text>
</comment>
<comment type="catalytic activity">
    <reaction evidence="1">
        <text>3-oxopropanoate + NAD(+) + CoA + H2O = hydrogencarbonate + acetyl-CoA + NADH + H(+)</text>
        <dbReference type="Rhea" id="RHEA:76615"/>
        <dbReference type="ChEBI" id="CHEBI:15377"/>
        <dbReference type="ChEBI" id="CHEBI:15378"/>
        <dbReference type="ChEBI" id="CHEBI:17544"/>
        <dbReference type="ChEBI" id="CHEBI:33190"/>
        <dbReference type="ChEBI" id="CHEBI:57287"/>
        <dbReference type="ChEBI" id="CHEBI:57288"/>
        <dbReference type="ChEBI" id="CHEBI:57540"/>
        <dbReference type="ChEBI" id="CHEBI:57945"/>
        <dbReference type="EC" id="1.2.1.27"/>
    </reaction>
    <physiologicalReaction direction="left-to-right" evidence="1">
        <dbReference type="Rhea" id="RHEA:76616"/>
    </physiologicalReaction>
</comment>
<comment type="catalytic activity">
    <reaction evidence="1">
        <text>2-methyl-3-oxopropanoate + NAD(+) + CoA + H2O = propanoyl-CoA + hydrogencarbonate + NADH + H(+)</text>
        <dbReference type="Rhea" id="RHEA:20804"/>
        <dbReference type="ChEBI" id="CHEBI:15377"/>
        <dbReference type="ChEBI" id="CHEBI:15378"/>
        <dbReference type="ChEBI" id="CHEBI:17544"/>
        <dbReference type="ChEBI" id="CHEBI:57287"/>
        <dbReference type="ChEBI" id="CHEBI:57392"/>
        <dbReference type="ChEBI" id="CHEBI:57540"/>
        <dbReference type="ChEBI" id="CHEBI:57700"/>
        <dbReference type="ChEBI" id="CHEBI:57945"/>
        <dbReference type="EC" id="1.2.1.27"/>
    </reaction>
    <physiologicalReaction direction="left-to-right" evidence="1">
        <dbReference type="Rhea" id="RHEA:20805"/>
    </physiologicalReaction>
</comment>
<comment type="pathway">
    <text evidence="1">Polyol metabolism; myo-inositol degradation into acetyl-CoA; acetyl-CoA from myo-inositol: step 7/7.</text>
</comment>
<comment type="subunit">
    <text evidence="1">Homotetramer.</text>
</comment>
<comment type="similarity">
    <text evidence="1">Belongs to the aldehyde dehydrogenase family. IolA subfamily.</text>
</comment>
<protein>
    <recommendedName>
        <fullName evidence="1">Malonate-semialdehyde dehydrogenase 1</fullName>
        <shortName evidence="1">MSA dehydrogenase 1</shortName>
        <ecNumber evidence="1">1.2.1.27</ecNumber>
    </recommendedName>
    <alternativeName>
        <fullName evidence="1">Methylmalonate-semialdehyde dehydrogenase 1</fullName>
        <shortName evidence="1">MMSA dehydrogenase 1</shortName>
        <shortName evidence="1">MSDH 1</shortName>
    </alternativeName>
</protein>